<organism>
    <name type="scientific">Shigella sonnei (strain Ss046)</name>
    <dbReference type="NCBI Taxonomy" id="300269"/>
    <lineage>
        <taxon>Bacteria</taxon>
        <taxon>Pseudomonadati</taxon>
        <taxon>Pseudomonadota</taxon>
        <taxon>Gammaproteobacteria</taxon>
        <taxon>Enterobacterales</taxon>
        <taxon>Enterobacteriaceae</taxon>
        <taxon>Shigella</taxon>
    </lineage>
</organism>
<accession>Q3Z4D1</accession>
<name>MIAB_SHISS</name>
<comment type="function">
    <text evidence="1">Catalyzes the methylthiolation of N6-(dimethylallyl)adenosine (i(6)A), leading to the formation of 2-methylthio-N6-(dimethylallyl)adenosine (ms(2)i(6)A) at position 37 in tRNAs that read codons beginning with uridine.</text>
</comment>
<comment type="catalytic activity">
    <reaction evidence="1">
        <text>N(6)-dimethylallyladenosine(37) in tRNA + (sulfur carrier)-SH + AH2 + 2 S-adenosyl-L-methionine = 2-methylsulfanyl-N(6)-dimethylallyladenosine(37) in tRNA + (sulfur carrier)-H + 5'-deoxyadenosine + L-methionine + A + S-adenosyl-L-homocysteine + 2 H(+)</text>
        <dbReference type="Rhea" id="RHEA:37067"/>
        <dbReference type="Rhea" id="RHEA-COMP:10375"/>
        <dbReference type="Rhea" id="RHEA-COMP:10376"/>
        <dbReference type="Rhea" id="RHEA-COMP:14737"/>
        <dbReference type="Rhea" id="RHEA-COMP:14739"/>
        <dbReference type="ChEBI" id="CHEBI:13193"/>
        <dbReference type="ChEBI" id="CHEBI:15378"/>
        <dbReference type="ChEBI" id="CHEBI:17319"/>
        <dbReference type="ChEBI" id="CHEBI:17499"/>
        <dbReference type="ChEBI" id="CHEBI:29917"/>
        <dbReference type="ChEBI" id="CHEBI:57844"/>
        <dbReference type="ChEBI" id="CHEBI:57856"/>
        <dbReference type="ChEBI" id="CHEBI:59789"/>
        <dbReference type="ChEBI" id="CHEBI:64428"/>
        <dbReference type="ChEBI" id="CHEBI:74415"/>
        <dbReference type="ChEBI" id="CHEBI:74417"/>
        <dbReference type="EC" id="2.8.4.3"/>
    </reaction>
</comment>
<comment type="cofactor">
    <cofactor evidence="1">
        <name>[4Fe-4S] cluster</name>
        <dbReference type="ChEBI" id="CHEBI:49883"/>
    </cofactor>
    <text evidence="1">Binds 2 [4Fe-4S] clusters. One cluster is coordinated with 3 cysteines and an exchangeable S-adenosyl-L-methionine.</text>
</comment>
<comment type="subunit">
    <text evidence="1">Monomer.</text>
</comment>
<comment type="subcellular location">
    <subcellularLocation>
        <location evidence="1">Cytoplasm</location>
    </subcellularLocation>
</comment>
<comment type="similarity">
    <text evidence="1">Belongs to the methylthiotransferase family. MiaB subfamily.</text>
</comment>
<gene>
    <name evidence="1" type="primary">miaB</name>
    <name type="ordered locus">SSON_0615</name>
</gene>
<feature type="chain" id="PRO_0000374555" description="tRNA-2-methylthio-N(6)-dimethylallyladenosine synthase">
    <location>
        <begin position="1"/>
        <end position="474"/>
    </location>
</feature>
<feature type="domain" description="MTTase N-terminal" evidence="1">
    <location>
        <begin position="3"/>
        <end position="120"/>
    </location>
</feature>
<feature type="domain" description="Radical SAM core" evidence="2">
    <location>
        <begin position="143"/>
        <end position="375"/>
    </location>
</feature>
<feature type="domain" description="TRAM" evidence="1">
    <location>
        <begin position="378"/>
        <end position="441"/>
    </location>
</feature>
<feature type="binding site" evidence="1">
    <location>
        <position position="12"/>
    </location>
    <ligand>
        <name>[4Fe-4S] cluster</name>
        <dbReference type="ChEBI" id="CHEBI:49883"/>
        <label>1</label>
    </ligand>
</feature>
<feature type="binding site" evidence="1">
    <location>
        <position position="49"/>
    </location>
    <ligand>
        <name>[4Fe-4S] cluster</name>
        <dbReference type="ChEBI" id="CHEBI:49883"/>
        <label>1</label>
    </ligand>
</feature>
<feature type="binding site" evidence="1">
    <location>
        <position position="83"/>
    </location>
    <ligand>
        <name>[4Fe-4S] cluster</name>
        <dbReference type="ChEBI" id="CHEBI:49883"/>
        <label>1</label>
    </ligand>
</feature>
<feature type="binding site" evidence="1">
    <location>
        <position position="157"/>
    </location>
    <ligand>
        <name>[4Fe-4S] cluster</name>
        <dbReference type="ChEBI" id="CHEBI:49883"/>
        <label>2</label>
        <note>4Fe-4S-S-AdoMet</note>
    </ligand>
</feature>
<feature type="binding site" evidence="1">
    <location>
        <position position="161"/>
    </location>
    <ligand>
        <name>[4Fe-4S] cluster</name>
        <dbReference type="ChEBI" id="CHEBI:49883"/>
        <label>2</label>
        <note>4Fe-4S-S-AdoMet</note>
    </ligand>
</feature>
<feature type="binding site" evidence="1">
    <location>
        <position position="164"/>
    </location>
    <ligand>
        <name>[4Fe-4S] cluster</name>
        <dbReference type="ChEBI" id="CHEBI:49883"/>
        <label>2</label>
        <note>4Fe-4S-S-AdoMet</note>
    </ligand>
</feature>
<dbReference type="EC" id="2.8.4.3" evidence="1"/>
<dbReference type="EMBL" id="CP000038">
    <property type="protein sequence ID" value="AAZ87381.1"/>
    <property type="molecule type" value="Genomic_DNA"/>
</dbReference>
<dbReference type="RefSeq" id="WP_000162733.1">
    <property type="nucleotide sequence ID" value="NC_007384.1"/>
</dbReference>
<dbReference type="SMR" id="Q3Z4D1"/>
<dbReference type="GeneID" id="93776821"/>
<dbReference type="KEGG" id="ssn:SSON_0615"/>
<dbReference type="HOGENOM" id="CLU_018697_2_0_6"/>
<dbReference type="Proteomes" id="UP000002529">
    <property type="component" value="Chromosome"/>
</dbReference>
<dbReference type="GO" id="GO:0005829">
    <property type="term" value="C:cytosol"/>
    <property type="evidence" value="ECO:0007669"/>
    <property type="project" value="TreeGrafter"/>
</dbReference>
<dbReference type="GO" id="GO:0051539">
    <property type="term" value="F:4 iron, 4 sulfur cluster binding"/>
    <property type="evidence" value="ECO:0007669"/>
    <property type="project" value="UniProtKB-UniRule"/>
</dbReference>
<dbReference type="GO" id="GO:0046872">
    <property type="term" value="F:metal ion binding"/>
    <property type="evidence" value="ECO:0007669"/>
    <property type="project" value="UniProtKB-KW"/>
</dbReference>
<dbReference type="GO" id="GO:0035597">
    <property type="term" value="F:N6-isopentenyladenosine methylthiotransferase activity"/>
    <property type="evidence" value="ECO:0007669"/>
    <property type="project" value="TreeGrafter"/>
</dbReference>
<dbReference type="CDD" id="cd01335">
    <property type="entry name" value="Radical_SAM"/>
    <property type="match status" value="1"/>
</dbReference>
<dbReference type="FunFam" id="3.40.50.12160:FF:000001">
    <property type="entry name" value="tRNA-2-methylthio-N(6)-dimethylallyladenosine synthase"/>
    <property type="match status" value="1"/>
</dbReference>
<dbReference type="FunFam" id="3.80.30.20:FF:000001">
    <property type="entry name" value="tRNA-2-methylthio-N(6)-dimethylallyladenosine synthase 2"/>
    <property type="match status" value="1"/>
</dbReference>
<dbReference type="Gene3D" id="3.40.50.12160">
    <property type="entry name" value="Methylthiotransferase, N-terminal domain"/>
    <property type="match status" value="1"/>
</dbReference>
<dbReference type="Gene3D" id="3.80.30.20">
    <property type="entry name" value="tm_1862 like domain"/>
    <property type="match status" value="1"/>
</dbReference>
<dbReference type="HAMAP" id="MF_01864">
    <property type="entry name" value="tRNA_metthiotr_MiaB"/>
    <property type="match status" value="1"/>
</dbReference>
<dbReference type="InterPro" id="IPR006638">
    <property type="entry name" value="Elp3/MiaA/NifB-like_rSAM"/>
</dbReference>
<dbReference type="InterPro" id="IPR005839">
    <property type="entry name" value="Methylthiotransferase"/>
</dbReference>
<dbReference type="InterPro" id="IPR020612">
    <property type="entry name" value="Methylthiotransferase_CS"/>
</dbReference>
<dbReference type="InterPro" id="IPR013848">
    <property type="entry name" value="Methylthiotransferase_N"/>
</dbReference>
<dbReference type="InterPro" id="IPR038135">
    <property type="entry name" value="Methylthiotransferase_N_sf"/>
</dbReference>
<dbReference type="InterPro" id="IPR006463">
    <property type="entry name" value="MiaB_methiolase"/>
</dbReference>
<dbReference type="InterPro" id="IPR007197">
    <property type="entry name" value="rSAM"/>
</dbReference>
<dbReference type="InterPro" id="IPR023404">
    <property type="entry name" value="rSAM_horseshoe"/>
</dbReference>
<dbReference type="InterPro" id="IPR002792">
    <property type="entry name" value="TRAM_dom"/>
</dbReference>
<dbReference type="NCBIfam" id="TIGR01574">
    <property type="entry name" value="miaB-methiolase"/>
    <property type="match status" value="1"/>
</dbReference>
<dbReference type="NCBIfam" id="TIGR00089">
    <property type="entry name" value="MiaB/RimO family radical SAM methylthiotransferase"/>
    <property type="match status" value="1"/>
</dbReference>
<dbReference type="PANTHER" id="PTHR43020">
    <property type="entry name" value="CDK5 REGULATORY SUBUNIT-ASSOCIATED PROTEIN 1"/>
    <property type="match status" value="1"/>
</dbReference>
<dbReference type="PANTHER" id="PTHR43020:SF2">
    <property type="entry name" value="MITOCHONDRIAL TRNA METHYLTHIOTRANSFERASE CDK5RAP1"/>
    <property type="match status" value="1"/>
</dbReference>
<dbReference type="Pfam" id="PF04055">
    <property type="entry name" value="Radical_SAM"/>
    <property type="match status" value="1"/>
</dbReference>
<dbReference type="Pfam" id="PF01938">
    <property type="entry name" value="TRAM"/>
    <property type="match status" value="1"/>
</dbReference>
<dbReference type="Pfam" id="PF00919">
    <property type="entry name" value="UPF0004"/>
    <property type="match status" value="1"/>
</dbReference>
<dbReference type="SFLD" id="SFLDF00273">
    <property type="entry name" value="(dimethylallyl)adenosine_tRNA"/>
    <property type="match status" value="1"/>
</dbReference>
<dbReference type="SFLD" id="SFLDG01082">
    <property type="entry name" value="B12-binding_domain_containing"/>
    <property type="match status" value="1"/>
</dbReference>
<dbReference type="SFLD" id="SFLDS00029">
    <property type="entry name" value="Radical_SAM"/>
    <property type="match status" value="1"/>
</dbReference>
<dbReference type="SMART" id="SM00729">
    <property type="entry name" value="Elp3"/>
    <property type="match status" value="1"/>
</dbReference>
<dbReference type="SUPFAM" id="SSF102114">
    <property type="entry name" value="Radical SAM enzymes"/>
    <property type="match status" value="1"/>
</dbReference>
<dbReference type="PROSITE" id="PS51449">
    <property type="entry name" value="MTTASE_N"/>
    <property type="match status" value="1"/>
</dbReference>
<dbReference type="PROSITE" id="PS01278">
    <property type="entry name" value="MTTASE_RADICAL"/>
    <property type="match status" value="1"/>
</dbReference>
<dbReference type="PROSITE" id="PS51918">
    <property type="entry name" value="RADICAL_SAM"/>
    <property type="match status" value="1"/>
</dbReference>
<dbReference type="PROSITE" id="PS50926">
    <property type="entry name" value="TRAM"/>
    <property type="match status" value="1"/>
</dbReference>
<keyword id="KW-0004">4Fe-4S</keyword>
<keyword id="KW-0963">Cytoplasm</keyword>
<keyword id="KW-0408">Iron</keyword>
<keyword id="KW-0411">Iron-sulfur</keyword>
<keyword id="KW-0479">Metal-binding</keyword>
<keyword id="KW-1185">Reference proteome</keyword>
<keyword id="KW-0949">S-adenosyl-L-methionine</keyword>
<keyword id="KW-0808">Transferase</keyword>
<keyword id="KW-0819">tRNA processing</keyword>
<sequence length="474" mass="53649">MTKKLHIKTWGCQMNEYDSSKMADLLDATHGYQLTDVAEEADVLLLNTCSIREKAQEKVFHQLGRWKLLKEKNPDLIIGVGGCVASQEGEHIRQRAHYVDIIFGPQTLHRLPEMINSVRGDRSPVVDISFPEIEKFDRLPEPRAEGPTAFVSIMEGCNKYCTYCVVPYTRGEEVSRPSDDILFEIAQLAAQGVREVNLLGQNVNAWRGENYDGSTGSFADLLRLVAAIDGIDRIRFTTSHPIEFTDDIIEVYRDTPELVSFLHLPVQSGSDRILNLMGRTHTALEYKAIIRKLRAARPDIQISSDFIVGFPGETTEDFEKTMKLIADVNFDMSYSFIFSARPGTPAADMVDDVPEEEKKQRLYILQERINQQAMAWSRRMLGTTQRILVEGTSRKSIMELSGRTENNRVVNFEGTPDMIGKFVDVEITDVYPNSLRGKVVRTEDEMGLRVAETPESVIARTRKENDLGVGYYQP</sequence>
<protein>
    <recommendedName>
        <fullName evidence="1">tRNA-2-methylthio-N(6)-dimethylallyladenosine synthase</fullName>
        <ecNumber evidence="1">2.8.4.3</ecNumber>
    </recommendedName>
    <alternativeName>
        <fullName evidence="1">(Dimethylallyl)adenosine tRNA methylthiotransferase MiaB</fullName>
    </alternativeName>
    <alternativeName>
        <fullName evidence="1">tRNA-i(6)A37 methylthiotransferase</fullName>
    </alternativeName>
</protein>
<proteinExistence type="inferred from homology"/>
<evidence type="ECO:0000255" key="1">
    <source>
        <dbReference type="HAMAP-Rule" id="MF_01864"/>
    </source>
</evidence>
<evidence type="ECO:0000255" key="2">
    <source>
        <dbReference type="PROSITE-ProRule" id="PRU01266"/>
    </source>
</evidence>
<reference key="1">
    <citation type="journal article" date="2005" name="Nucleic Acids Res.">
        <title>Genome dynamics and diversity of Shigella species, the etiologic agents of bacillary dysentery.</title>
        <authorList>
            <person name="Yang F."/>
            <person name="Yang J."/>
            <person name="Zhang X."/>
            <person name="Chen L."/>
            <person name="Jiang Y."/>
            <person name="Yan Y."/>
            <person name="Tang X."/>
            <person name="Wang J."/>
            <person name="Xiong Z."/>
            <person name="Dong J."/>
            <person name="Xue Y."/>
            <person name="Zhu Y."/>
            <person name="Xu X."/>
            <person name="Sun L."/>
            <person name="Chen S."/>
            <person name="Nie H."/>
            <person name="Peng J."/>
            <person name="Xu J."/>
            <person name="Wang Y."/>
            <person name="Yuan Z."/>
            <person name="Wen Y."/>
            <person name="Yao Z."/>
            <person name="Shen Y."/>
            <person name="Qiang B."/>
            <person name="Hou Y."/>
            <person name="Yu J."/>
            <person name="Jin Q."/>
        </authorList>
    </citation>
    <scope>NUCLEOTIDE SEQUENCE [LARGE SCALE GENOMIC DNA]</scope>
    <source>
        <strain>Ss046</strain>
    </source>
</reference>